<organism>
    <name type="scientific">Synechococcus sp. (strain ATCC 27144 / PCC 6301 / SAUG 1402/1)</name>
    <name type="common">Anacystis nidulans</name>
    <dbReference type="NCBI Taxonomy" id="269084"/>
    <lineage>
        <taxon>Bacteria</taxon>
        <taxon>Bacillati</taxon>
        <taxon>Cyanobacteriota</taxon>
        <taxon>Cyanophyceae</taxon>
        <taxon>Synechococcales</taxon>
        <taxon>Synechococcaceae</taxon>
        <taxon>Synechococcus</taxon>
    </lineage>
</organism>
<comment type="function">
    <text evidence="1">Catalyzes the condensation of iminoaspartate with dihydroxyacetone phosphate to form quinolinate.</text>
</comment>
<comment type="catalytic activity">
    <reaction evidence="1">
        <text>iminosuccinate + dihydroxyacetone phosphate = quinolinate + phosphate + 2 H2O + H(+)</text>
        <dbReference type="Rhea" id="RHEA:25888"/>
        <dbReference type="ChEBI" id="CHEBI:15377"/>
        <dbReference type="ChEBI" id="CHEBI:15378"/>
        <dbReference type="ChEBI" id="CHEBI:29959"/>
        <dbReference type="ChEBI" id="CHEBI:43474"/>
        <dbReference type="ChEBI" id="CHEBI:57642"/>
        <dbReference type="ChEBI" id="CHEBI:77875"/>
        <dbReference type="EC" id="2.5.1.72"/>
    </reaction>
    <physiologicalReaction direction="left-to-right" evidence="1">
        <dbReference type="Rhea" id="RHEA:25889"/>
    </physiologicalReaction>
</comment>
<comment type="cofactor">
    <cofactor evidence="1">
        <name>[4Fe-4S] cluster</name>
        <dbReference type="ChEBI" id="CHEBI:49883"/>
    </cofactor>
    <text evidence="1">Binds 1 [4Fe-4S] cluster per subunit.</text>
</comment>
<comment type="pathway">
    <text evidence="1">Cofactor biosynthesis; NAD(+) biosynthesis; quinolinate from iminoaspartate: step 1/1.</text>
</comment>
<comment type="subcellular location">
    <subcellularLocation>
        <location evidence="1">Cytoplasm</location>
    </subcellularLocation>
</comment>
<comment type="similarity">
    <text evidence="1">Belongs to the quinolinate synthase family. Type 2 subfamily.</text>
</comment>
<accession>Q5N5W8</accession>
<evidence type="ECO:0000255" key="1">
    <source>
        <dbReference type="HAMAP-Rule" id="MF_00568"/>
    </source>
</evidence>
<sequence length="320" mass="35156">MFLAADRPTTDLPADLPAAIAALKQELNAVILAHYYQEAAIQDVADYIGDSLGLSRQAAAADADVIVFAGVHFMAETAKILNPQRQVLLPDLAAGCSLADSCPPEAFAAFKAAHPNHIVISYINCTAEIKALSDIICTSSNAVKIVQQIPVDQPIIFAPDRNLGRYVMQQTGRDLVLWDGSCIVHETFSEQRLLELQARHPDAEIIAHPECETPVLDQARFIGSTTALLNYSLNSPSREFIVVTEPGIIHQMQQAAPEKTFIPAPPQDTTCACNECPFMRLNTLEKLYLCMRDRRPEIQIPEETRLAALRPIERMLAMSA</sequence>
<proteinExistence type="inferred from homology"/>
<reference key="1">
    <citation type="journal article" date="2007" name="Photosyn. Res.">
        <title>Complete nucleotide sequence of the freshwater unicellular cyanobacterium Synechococcus elongatus PCC 6301 chromosome: gene content and organization.</title>
        <authorList>
            <person name="Sugita C."/>
            <person name="Ogata K."/>
            <person name="Shikata M."/>
            <person name="Jikuya H."/>
            <person name="Takano J."/>
            <person name="Furumichi M."/>
            <person name="Kanehisa M."/>
            <person name="Omata T."/>
            <person name="Sugiura M."/>
            <person name="Sugita M."/>
        </authorList>
    </citation>
    <scope>NUCLEOTIDE SEQUENCE [LARGE SCALE GENOMIC DNA]</scope>
    <source>
        <strain>ATCC 27144 / PCC 6301 / SAUG 1402/1</strain>
    </source>
</reference>
<protein>
    <recommendedName>
        <fullName evidence="1">Quinolinate synthase</fullName>
        <ecNumber evidence="1">2.5.1.72</ecNumber>
    </recommendedName>
</protein>
<dbReference type="EC" id="2.5.1.72" evidence="1"/>
<dbReference type="EMBL" id="AP008231">
    <property type="protein sequence ID" value="BAD78299.1"/>
    <property type="molecule type" value="Genomic_DNA"/>
</dbReference>
<dbReference type="RefSeq" id="WP_011242422.1">
    <property type="nucleotide sequence ID" value="NZ_CP085785.1"/>
</dbReference>
<dbReference type="SMR" id="Q5N5W8"/>
<dbReference type="GeneID" id="72430311"/>
<dbReference type="KEGG" id="syc:syc0109_c"/>
<dbReference type="eggNOG" id="COG0379">
    <property type="taxonomic scope" value="Bacteria"/>
</dbReference>
<dbReference type="UniPathway" id="UPA00253">
    <property type="reaction ID" value="UER00327"/>
</dbReference>
<dbReference type="Proteomes" id="UP000001175">
    <property type="component" value="Chromosome"/>
</dbReference>
<dbReference type="GO" id="GO:0005829">
    <property type="term" value="C:cytosol"/>
    <property type="evidence" value="ECO:0007669"/>
    <property type="project" value="TreeGrafter"/>
</dbReference>
<dbReference type="GO" id="GO:0051539">
    <property type="term" value="F:4 iron, 4 sulfur cluster binding"/>
    <property type="evidence" value="ECO:0007669"/>
    <property type="project" value="UniProtKB-KW"/>
</dbReference>
<dbReference type="GO" id="GO:0046872">
    <property type="term" value="F:metal ion binding"/>
    <property type="evidence" value="ECO:0007669"/>
    <property type="project" value="UniProtKB-KW"/>
</dbReference>
<dbReference type="GO" id="GO:0008987">
    <property type="term" value="F:quinolinate synthetase A activity"/>
    <property type="evidence" value="ECO:0007669"/>
    <property type="project" value="UniProtKB-UniRule"/>
</dbReference>
<dbReference type="GO" id="GO:0034628">
    <property type="term" value="P:'de novo' NAD biosynthetic process from L-aspartate"/>
    <property type="evidence" value="ECO:0007669"/>
    <property type="project" value="TreeGrafter"/>
</dbReference>
<dbReference type="FunFam" id="3.40.50.10800:FF:000003">
    <property type="entry name" value="Quinolinate synthase A"/>
    <property type="match status" value="1"/>
</dbReference>
<dbReference type="Gene3D" id="3.40.50.10800">
    <property type="entry name" value="NadA-like"/>
    <property type="match status" value="3"/>
</dbReference>
<dbReference type="HAMAP" id="MF_00568">
    <property type="entry name" value="NadA_type2"/>
    <property type="match status" value="1"/>
</dbReference>
<dbReference type="InterPro" id="IPR003473">
    <property type="entry name" value="NadA"/>
</dbReference>
<dbReference type="InterPro" id="IPR036094">
    <property type="entry name" value="NadA_sf"/>
</dbReference>
<dbReference type="InterPro" id="IPR023066">
    <property type="entry name" value="Quinolinate_synth_type2"/>
</dbReference>
<dbReference type="NCBIfam" id="TIGR00550">
    <property type="entry name" value="nadA"/>
    <property type="match status" value="1"/>
</dbReference>
<dbReference type="NCBIfam" id="NF006878">
    <property type="entry name" value="PRK09375.1-2"/>
    <property type="match status" value="1"/>
</dbReference>
<dbReference type="PANTHER" id="PTHR30573:SF0">
    <property type="entry name" value="QUINOLINATE SYNTHASE, CHLOROPLASTIC"/>
    <property type="match status" value="1"/>
</dbReference>
<dbReference type="PANTHER" id="PTHR30573">
    <property type="entry name" value="QUINOLINATE SYNTHETASE A"/>
    <property type="match status" value="1"/>
</dbReference>
<dbReference type="Pfam" id="PF02445">
    <property type="entry name" value="NadA"/>
    <property type="match status" value="1"/>
</dbReference>
<dbReference type="SUPFAM" id="SSF142754">
    <property type="entry name" value="NadA-like"/>
    <property type="match status" value="1"/>
</dbReference>
<keyword id="KW-0004">4Fe-4S</keyword>
<keyword id="KW-0963">Cytoplasm</keyword>
<keyword id="KW-0408">Iron</keyword>
<keyword id="KW-0411">Iron-sulfur</keyword>
<keyword id="KW-0479">Metal-binding</keyword>
<keyword id="KW-0662">Pyridine nucleotide biosynthesis</keyword>
<keyword id="KW-0808">Transferase</keyword>
<feature type="chain" id="PRO_1000129444" description="Quinolinate synthase">
    <location>
        <begin position="1"/>
        <end position="320"/>
    </location>
</feature>
<feature type="binding site" evidence="1">
    <location>
        <position position="34"/>
    </location>
    <ligand>
        <name>iminosuccinate</name>
        <dbReference type="ChEBI" id="CHEBI:77875"/>
    </ligand>
</feature>
<feature type="binding site" evidence="1">
    <location>
        <position position="51"/>
    </location>
    <ligand>
        <name>iminosuccinate</name>
        <dbReference type="ChEBI" id="CHEBI:77875"/>
    </ligand>
</feature>
<feature type="binding site" evidence="1">
    <location>
        <position position="96"/>
    </location>
    <ligand>
        <name>[4Fe-4S] cluster</name>
        <dbReference type="ChEBI" id="CHEBI:49883"/>
    </ligand>
</feature>
<feature type="binding site" evidence="1">
    <location>
        <begin position="122"/>
        <end position="124"/>
    </location>
    <ligand>
        <name>iminosuccinate</name>
        <dbReference type="ChEBI" id="CHEBI:77875"/>
    </ligand>
</feature>
<feature type="binding site" evidence="1">
    <location>
        <position position="139"/>
    </location>
    <ligand>
        <name>iminosuccinate</name>
        <dbReference type="ChEBI" id="CHEBI:77875"/>
    </ligand>
</feature>
<feature type="binding site" evidence="1">
    <location>
        <position position="182"/>
    </location>
    <ligand>
        <name>[4Fe-4S] cluster</name>
        <dbReference type="ChEBI" id="CHEBI:49883"/>
    </ligand>
</feature>
<feature type="binding site" evidence="1">
    <location>
        <begin position="208"/>
        <end position="210"/>
    </location>
    <ligand>
        <name>iminosuccinate</name>
        <dbReference type="ChEBI" id="CHEBI:77875"/>
    </ligand>
</feature>
<feature type="binding site" evidence="1">
    <location>
        <position position="225"/>
    </location>
    <ligand>
        <name>iminosuccinate</name>
        <dbReference type="ChEBI" id="CHEBI:77875"/>
    </ligand>
</feature>
<feature type="binding site" evidence="1">
    <location>
        <position position="276"/>
    </location>
    <ligand>
        <name>[4Fe-4S] cluster</name>
        <dbReference type="ChEBI" id="CHEBI:49883"/>
    </ligand>
</feature>
<name>NADA_SYNP6</name>
<gene>
    <name evidence="1" type="primary">nadA</name>
    <name type="ordered locus">syc0109_c</name>
</gene>